<feature type="chain" id="PRO_1000133125" description="Chaperone protein DnaK">
    <location>
        <begin position="1"/>
        <end position="638"/>
    </location>
</feature>
<feature type="region of interest" description="Disordered" evidence="2">
    <location>
        <begin position="599"/>
        <end position="638"/>
    </location>
</feature>
<feature type="compositionally biased region" description="Acidic residues" evidence="2">
    <location>
        <begin position="621"/>
        <end position="630"/>
    </location>
</feature>
<feature type="modified residue" description="Phosphothreonine; by autocatalysis" evidence="1">
    <location>
        <position position="198"/>
    </location>
</feature>
<organism>
    <name type="scientific">Allorhizobium ampelinum (strain ATCC BAA-846 / DSM 112012 / S4)</name>
    <name type="common">Agrobacterium vitis (strain S4)</name>
    <dbReference type="NCBI Taxonomy" id="311402"/>
    <lineage>
        <taxon>Bacteria</taxon>
        <taxon>Pseudomonadati</taxon>
        <taxon>Pseudomonadota</taxon>
        <taxon>Alphaproteobacteria</taxon>
        <taxon>Hyphomicrobiales</taxon>
        <taxon>Rhizobiaceae</taxon>
        <taxon>Rhizobium/Agrobacterium group</taxon>
        <taxon>Allorhizobium</taxon>
        <taxon>Allorhizobium ampelinum</taxon>
    </lineage>
</organism>
<proteinExistence type="inferred from homology"/>
<keyword id="KW-0067">ATP-binding</keyword>
<keyword id="KW-0143">Chaperone</keyword>
<keyword id="KW-0547">Nucleotide-binding</keyword>
<keyword id="KW-0597">Phosphoprotein</keyword>
<keyword id="KW-1185">Reference proteome</keyword>
<keyword id="KW-0346">Stress response</keyword>
<protein>
    <recommendedName>
        <fullName evidence="1">Chaperone protein DnaK</fullName>
    </recommendedName>
    <alternativeName>
        <fullName evidence="1">HSP70</fullName>
    </alternativeName>
    <alternativeName>
        <fullName evidence="1">Heat shock 70 kDa protein</fullName>
    </alternativeName>
    <alternativeName>
        <fullName evidence="1">Heat shock protein 70</fullName>
    </alternativeName>
</protein>
<reference key="1">
    <citation type="journal article" date="2009" name="J. Bacteriol.">
        <title>Genome sequences of three Agrobacterium biovars help elucidate the evolution of multichromosome genomes in bacteria.</title>
        <authorList>
            <person name="Slater S.C."/>
            <person name="Goldman B.S."/>
            <person name="Goodner B."/>
            <person name="Setubal J.C."/>
            <person name="Farrand S.K."/>
            <person name="Nester E.W."/>
            <person name="Burr T.J."/>
            <person name="Banta L."/>
            <person name="Dickerman A.W."/>
            <person name="Paulsen I."/>
            <person name="Otten L."/>
            <person name="Suen G."/>
            <person name="Welch R."/>
            <person name="Almeida N.F."/>
            <person name="Arnold F."/>
            <person name="Burton O.T."/>
            <person name="Du Z."/>
            <person name="Ewing A."/>
            <person name="Godsy E."/>
            <person name="Heisel S."/>
            <person name="Houmiel K.L."/>
            <person name="Jhaveri J."/>
            <person name="Lu J."/>
            <person name="Miller N.M."/>
            <person name="Norton S."/>
            <person name="Chen Q."/>
            <person name="Phoolcharoen W."/>
            <person name="Ohlin V."/>
            <person name="Ondrusek D."/>
            <person name="Pride N."/>
            <person name="Stricklin S.L."/>
            <person name="Sun J."/>
            <person name="Wheeler C."/>
            <person name="Wilson L."/>
            <person name="Zhu H."/>
            <person name="Wood D.W."/>
        </authorList>
    </citation>
    <scope>NUCLEOTIDE SEQUENCE [LARGE SCALE GENOMIC DNA]</scope>
    <source>
        <strain>ATCC BAA-846 / DSM 112012 / S4</strain>
    </source>
</reference>
<name>DNAK_ALLAM</name>
<gene>
    <name evidence="1" type="primary">dnaK</name>
    <name type="ordered locus">Avi_0306</name>
</gene>
<evidence type="ECO:0000255" key="1">
    <source>
        <dbReference type="HAMAP-Rule" id="MF_00332"/>
    </source>
</evidence>
<evidence type="ECO:0000256" key="2">
    <source>
        <dbReference type="SAM" id="MobiDB-lite"/>
    </source>
</evidence>
<sequence>MAKVIGIDLGTTNSCVSVMDGKDAKVIENSEGARTTPSMVAFSDDGERLVGQPAKRQAVTNPTNTLFAVKRLIGRRYEDPTVEKDKGLVPFPIIKGDNGDAWVEAQGKGYSPAQISAMILQKMKETAEAYLGEKVEKAVITVPAYFNDAQRQATKDAGRIAGLEVLRIINEPTAAALAYGLDKTEGKTIAVYDLGGGTFDISVLEIGDGVFEVKSTNGDTFLGGEDFDMRLVEYLAAEFKKEQGIELKNDKLALQRLKEAAEKAKIELSSSQQTEINLPFITADASGPKHLTMKLTRAKFENLVDDLVQRTVAPCKAALKDAGVTAADIDEVVLVGGMSRMPKVQEVVKQLFGKEPHKGVNPDEVVAMGAAIQAGVLQGDVKDVLLLDVTPLSLGIETLGGVFTRLIDRNTTIPTKKSQVFSTADDNQQAVTIRVSQGEREMAQDNKLLGQFDLVGLPPSPRGVPQIEVTFDIDANGIVQVSAKDKGTGKEQQIRIQASGGLSDADIEKMVKDAEANAEADKNRRAVVEAKNQAESLIHSTEKSVKDYGDKVSADDRKAIEDAIAALKSSIETSEPNAEDIQAKTQTLMEVSMKLGQAIYESQQAEGGAEGGPSGHHDDGIVDADYEEVKDDNTKKSA</sequence>
<accession>B9JZ87</accession>
<dbReference type="EMBL" id="CP000633">
    <property type="protein sequence ID" value="ACM35199.1"/>
    <property type="molecule type" value="Genomic_DNA"/>
</dbReference>
<dbReference type="RefSeq" id="WP_012654729.1">
    <property type="nucleotide sequence ID" value="NC_011989.1"/>
</dbReference>
<dbReference type="SMR" id="B9JZ87"/>
<dbReference type="STRING" id="311402.Avi_0306"/>
<dbReference type="KEGG" id="avi:Avi_0306"/>
<dbReference type="eggNOG" id="COG0443">
    <property type="taxonomic scope" value="Bacteria"/>
</dbReference>
<dbReference type="HOGENOM" id="CLU_005965_2_1_5"/>
<dbReference type="Proteomes" id="UP000001596">
    <property type="component" value="Chromosome 1"/>
</dbReference>
<dbReference type="GO" id="GO:0005524">
    <property type="term" value="F:ATP binding"/>
    <property type="evidence" value="ECO:0007669"/>
    <property type="project" value="UniProtKB-UniRule"/>
</dbReference>
<dbReference type="GO" id="GO:0140662">
    <property type="term" value="F:ATP-dependent protein folding chaperone"/>
    <property type="evidence" value="ECO:0007669"/>
    <property type="project" value="InterPro"/>
</dbReference>
<dbReference type="GO" id="GO:0051082">
    <property type="term" value="F:unfolded protein binding"/>
    <property type="evidence" value="ECO:0007669"/>
    <property type="project" value="InterPro"/>
</dbReference>
<dbReference type="CDD" id="cd11733">
    <property type="entry name" value="ASKHA_NBD_HSP70_HSPA9"/>
    <property type="match status" value="1"/>
</dbReference>
<dbReference type="FunFam" id="2.60.34.10:FF:000014">
    <property type="entry name" value="Chaperone protein DnaK HSP70"/>
    <property type="match status" value="1"/>
</dbReference>
<dbReference type="FunFam" id="3.30.420.40:FF:000020">
    <property type="entry name" value="Chaperone protein HscA homolog"/>
    <property type="match status" value="1"/>
</dbReference>
<dbReference type="FunFam" id="1.20.1270.10:FF:000001">
    <property type="entry name" value="Molecular chaperone DnaK"/>
    <property type="match status" value="1"/>
</dbReference>
<dbReference type="FunFam" id="3.30.420.40:FF:000004">
    <property type="entry name" value="Molecular chaperone DnaK"/>
    <property type="match status" value="1"/>
</dbReference>
<dbReference type="FunFam" id="3.90.640.10:FF:000003">
    <property type="entry name" value="Molecular chaperone DnaK"/>
    <property type="match status" value="1"/>
</dbReference>
<dbReference type="Gene3D" id="1.20.1270.10">
    <property type="match status" value="1"/>
</dbReference>
<dbReference type="Gene3D" id="3.30.420.40">
    <property type="match status" value="2"/>
</dbReference>
<dbReference type="Gene3D" id="3.90.640.10">
    <property type="entry name" value="Actin, Chain A, domain 4"/>
    <property type="match status" value="1"/>
</dbReference>
<dbReference type="Gene3D" id="2.60.34.10">
    <property type="entry name" value="Substrate Binding Domain Of DNAk, Chain A, domain 1"/>
    <property type="match status" value="1"/>
</dbReference>
<dbReference type="HAMAP" id="MF_00332">
    <property type="entry name" value="DnaK"/>
    <property type="match status" value="1"/>
</dbReference>
<dbReference type="InterPro" id="IPR043129">
    <property type="entry name" value="ATPase_NBD"/>
</dbReference>
<dbReference type="InterPro" id="IPR012725">
    <property type="entry name" value="Chaperone_DnaK"/>
</dbReference>
<dbReference type="InterPro" id="IPR018181">
    <property type="entry name" value="Heat_shock_70_CS"/>
</dbReference>
<dbReference type="InterPro" id="IPR029048">
    <property type="entry name" value="HSP70_C_sf"/>
</dbReference>
<dbReference type="InterPro" id="IPR029047">
    <property type="entry name" value="HSP70_peptide-bd_sf"/>
</dbReference>
<dbReference type="InterPro" id="IPR013126">
    <property type="entry name" value="Hsp_70_fam"/>
</dbReference>
<dbReference type="NCBIfam" id="NF001413">
    <property type="entry name" value="PRK00290.1"/>
    <property type="match status" value="1"/>
</dbReference>
<dbReference type="NCBIfam" id="NF003520">
    <property type="entry name" value="PRK05183.1"/>
    <property type="match status" value="1"/>
</dbReference>
<dbReference type="NCBIfam" id="TIGR02350">
    <property type="entry name" value="prok_dnaK"/>
    <property type="match status" value="1"/>
</dbReference>
<dbReference type="PANTHER" id="PTHR19375">
    <property type="entry name" value="HEAT SHOCK PROTEIN 70KDA"/>
    <property type="match status" value="1"/>
</dbReference>
<dbReference type="Pfam" id="PF00012">
    <property type="entry name" value="HSP70"/>
    <property type="match status" value="1"/>
</dbReference>
<dbReference type="PRINTS" id="PR00301">
    <property type="entry name" value="HEATSHOCK70"/>
</dbReference>
<dbReference type="SUPFAM" id="SSF53067">
    <property type="entry name" value="Actin-like ATPase domain"/>
    <property type="match status" value="2"/>
</dbReference>
<dbReference type="SUPFAM" id="SSF100934">
    <property type="entry name" value="Heat shock protein 70kD (HSP70), C-terminal subdomain"/>
    <property type="match status" value="1"/>
</dbReference>
<dbReference type="SUPFAM" id="SSF100920">
    <property type="entry name" value="Heat shock protein 70kD (HSP70), peptide-binding domain"/>
    <property type="match status" value="1"/>
</dbReference>
<dbReference type="PROSITE" id="PS00297">
    <property type="entry name" value="HSP70_1"/>
    <property type="match status" value="1"/>
</dbReference>
<dbReference type="PROSITE" id="PS00329">
    <property type="entry name" value="HSP70_2"/>
    <property type="match status" value="1"/>
</dbReference>
<dbReference type="PROSITE" id="PS01036">
    <property type="entry name" value="HSP70_3"/>
    <property type="match status" value="1"/>
</dbReference>
<comment type="function">
    <text evidence="1">Acts as a chaperone.</text>
</comment>
<comment type="induction">
    <text evidence="1">By stress conditions e.g. heat shock.</text>
</comment>
<comment type="similarity">
    <text evidence="1">Belongs to the heat shock protein 70 family.</text>
</comment>